<name>HHLA3_HUMAN</name>
<accession>Q9XRX5</accession>
<accession>D3DQ74</accession>
<accession>Q5VZP2</accession>
<accession>Q96FH5</accession>
<accession>Q9XRX4</accession>
<gene>
    <name evidence="7" type="primary">ANKRD13C-DT</name>
    <name evidence="5" type="synonym">HHLA3</name>
</gene>
<keyword id="KW-0025">Alternative splicing</keyword>
<keyword id="KW-1185">Reference proteome</keyword>
<sequence>MFGACYKQPLKPSGSEPPAEECRMTPRHAGCDVTEMQRILSQPTFTEHLLRAVCTKLANMYSTSTDCREHCRRGMKAKQLKAEAGRSCQRKGVPIQTPREHSWISCKKEFEANP</sequence>
<evidence type="ECO:0000256" key="1">
    <source>
        <dbReference type="SAM" id="MobiDB-lite"/>
    </source>
</evidence>
<evidence type="ECO:0000269" key="2">
    <source>
    </source>
</evidence>
<evidence type="ECO:0000303" key="3">
    <source>
    </source>
</evidence>
<evidence type="ECO:0000303" key="4">
    <source>
    </source>
</evidence>
<evidence type="ECO:0000303" key="5">
    <source ref="3"/>
</evidence>
<evidence type="ECO:0000305" key="6"/>
<evidence type="ECO:0000312" key="7">
    <source>
        <dbReference type="HGNC" id="HGNC:4906"/>
    </source>
</evidence>
<proteinExistence type="uncertain"/>
<comment type="interaction">
    <interactant intactId="EBI-750554">
        <id>Q9XRX5</id>
    </interactant>
    <interactant intactId="EBI-372942">
        <id>Q13287</id>
        <label>NMI</label>
    </interactant>
    <organismsDiffer>false</organismsDiffer>
    <experiments>8</experiments>
</comment>
<comment type="interaction">
    <interactant intactId="EBI-12051311">
        <id>Q9XRX5-2</id>
    </interactant>
    <interactant intactId="EBI-9641086">
        <id>P21333-2</id>
        <label>FLNA</label>
    </interactant>
    <organismsDiffer>false</organismsDiffer>
    <experiments>3</experiments>
</comment>
<comment type="interaction">
    <interactant intactId="EBI-12051311">
        <id>Q9XRX5-2</id>
    </interactant>
    <interactant intactId="EBI-724076">
        <id>Q99750</id>
        <label>MDFI</label>
    </interactant>
    <organismsDiffer>false</organismsDiffer>
    <experiments>3</experiments>
</comment>
<comment type="interaction">
    <interactant intactId="EBI-12051311">
        <id>Q9XRX5-2</id>
    </interactant>
    <interactant intactId="EBI-372942">
        <id>Q13287</id>
        <label>NMI</label>
    </interactant>
    <organismsDiffer>false</organismsDiffer>
    <experiments>3</experiments>
</comment>
<comment type="alternative products">
    <event type="alternative splicing"/>
    <isoform>
        <id>Q9XRX5-4</id>
        <name>4</name>
        <name>type 3</name>
        <sequence type="displayed"/>
    </isoform>
    <isoform>
        <id>Q9XRX5-2</id>
        <name>2</name>
        <name>type 2</name>
        <sequence type="described" ref="VSP_041094"/>
    </isoform>
    <isoform>
        <id>Q9XRX5-3</id>
        <name>3</name>
        <name>type 1</name>
        <sequence type="described" ref="VSP_020542"/>
    </isoform>
</comment>
<comment type="tissue specificity">
    <text evidence="2">Expressed in kidney and liver.</text>
</comment>
<comment type="caution">
    <text evidence="6">Product of a dubious CDS prediction. May be a long non-coding RNA.</text>
</comment>
<comment type="sequence caution" evidence="6">
    <conflict type="frameshift">
        <sequence resource="EMBL-CDS" id="AAD33288"/>
    </conflict>
</comment>
<organism>
    <name type="scientific">Homo sapiens</name>
    <name type="common">Human</name>
    <dbReference type="NCBI Taxonomy" id="9606"/>
    <lineage>
        <taxon>Eukaryota</taxon>
        <taxon>Metazoa</taxon>
        <taxon>Chordata</taxon>
        <taxon>Craniata</taxon>
        <taxon>Vertebrata</taxon>
        <taxon>Euteleostomi</taxon>
        <taxon>Mammalia</taxon>
        <taxon>Eutheria</taxon>
        <taxon>Euarchontoglires</taxon>
        <taxon>Primates</taxon>
        <taxon>Haplorrhini</taxon>
        <taxon>Catarrhini</taxon>
        <taxon>Hominidae</taxon>
        <taxon>Homo</taxon>
    </lineage>
</organism>
<reference key="1">
    <citation type="journal article" date="1999" name="Genomics">
        <title>Endogenous retroviruses provide the primary polyadenylation signal for two new human genes (HHLA2 and HHLA3).</title>
        <authorList>
            <person name="Mager D.L."/>
            <person name="Hunter D.G."/>
            <person name="Schertzer M."/>
            <person name="Freeman J.D."/>
        </authorList>
    </citation>
    <scope>NUCLEOTIDE SEQUENCE [MRNA] (ISOFORM 3)</scope>
    <scope>NUCLEOTIDE SEQUENCE [MRNA] OF 13-114 (ISOFORM 4)</scope>
    <scope>ALTERNATIVE SPLICING (ISOFORM 2)</scope>
    <scope>TISSUE SPECIFICITY</scope>
</reference>
<reference key="2">
    <citation type="journal article" date="2006" name="Nature">
        <title>The DNA sequence and biological annotation of human chromosome 1.</title>
        <authorList>
            <person name="Gregory S.G."/>
            <person name="Barlow K.F."/>
            <person name="McLay K.E."/>
            <person name="Kaul R."/>
            <person name="Swarbreck D."/>
            <person name="Dunham A."/>
            <person name="Scott C.E."/>
            <person name="Howe K.L."/>
            <person name="Woodfine K."/>
            <person name="Spencer C.C.A."/>
            <person name="Jones M.C."/>
            <person name="Gillson C."/>
            <person name="Searle S."/>
            <person name="Zhou Y."/>
            <person name="Kokocinski F."/>
            <person name="McDonald L."/>
            <person name="Evans R."/>
            <person name="Phillips K."/>
            <person name="Atkinson A."/>
            <person name="Cooper R."/>
            <person name="Jones C."/>
            <person name="Hall R.E."/>
            <person name="Andrews T.D."/>
            <person name="Lloyd C."/>
            <person name="Ainscough R."/>
            <person name="Almeida J.P."/>
            <person name="Ambrose K.D."/>
            <person name="Anderson F."/>
            <person name="Andrew R.W."/>
            <person name="Ashwell R.I.S."/>
            <person name="Aubin K."/>
            <person name="Babbage A.K."/>
            <person name="Bagguley C.L."/>
            <person name="Bailey J."/>
            <person name="Beasley H."/>
            <person name="Bethel G."/>
            <person name="Bird C.P."/>
            <person name="Bray-Allen S."/>
            <person name="Brown J.Y."/>
            <person name="Brown A.J."/>
            <person name="Buckley D."/>
            <person name="Burton J."/>
            <person name="Bye J."/>
            <person name="Carder C."/>
            <person name="Chapman J.C."/>
            <person name="Clark S.Y."/>
            <person name="Clarke G."/>
            <person name="Clee C."/>
            <person name="Cobley V."/>
            <person name="Collier R.E."/>
            <person name="Corby N."/>
            <person name="Coville G.J."/>
            <person name="Davies J."/>
            <person name="Deadman R."/>
            <person name="Dunn M."/>
            <person name="Earthrowl M."/>
            <person name="Ellington A.G."/>
            <person name="Errington H."/>
            <person name="Frankish A."/>
            <person name="Frankland J."/>
            <person name="French L."/>
            <person name="Garner P."/>
            <person name="Garnett J."/>
            <person name="Gay L."/>
            <person name="Ghori M.R.J."/>
            <person name="Gibson R."/>
            <person name="Gilby L.M."/>
            <person name="Gillett W."/>
            <person name="Glithero R.J."/>
            <person name="Grafham D.V."/>
            <person name="Griffiths C."/>
            <person name="Griffiths-Jones S."/>
            <person name="Grocock R."/>
            <person name="Hammond S."/>
            <person name="Harrison E.S.I."/>
            <person name="Hart E."/>
            <person name="Haugen E."/>
            <person name="Heath P.D."/>
            <person name="Holmes S."/>
            <person name="Holt K."/>
            <person name="Howden P.J."/>
            <person name="Hunt A.R."/>
            <person name="Hunt S.E."/>
            <person name="Hunter G."/>
            <person name="Isherwood J."/>
            <person name="James R."/>
            <person name="Johnson C."/>
            <person name="Johnson D."/>
            <person name="Joy A."/>
            <person name="Kay M."/>
            <person name="Kershaw J.K."/>
            <person name="Kibukawa M."/>
            <person name="Kimberley A.M."/>
            <person name="King A."/>
            <person name="Knights A.J."/>
            <person name="Lad H."/>
            <person name="Laird G."/>
            <person name="Lawlor S."/>
            <person name="Leongamornlert D.A."/>
            <person name="Lloyd D.M."/>
            <person name="Loveland J."/>
            <person name="Lovell J."/>
            <person name="Lush M.J."/>
            <person name="Lyne R."/>
            <person name="Martin S."/>
            <person name="Mashreghi-Mohammadi M."/>
            <person name="Matthews L."/>
            <person name="Matthews N.S.W."/>
            <person name="McLaren S."/>
            <person name="Milne S."/>
            <person name="Mistry S."/>
            <person name="Moore M.J.F."/>
            <person name="Nickerson T."/>
            <person name="O'Dell C.N."/>
            <person name="Oliver K."/>
            <person name="Palmeiri A."/>
            <person name="Palmer S.A."/>
            <person name="Parker A."/>
            <person name="Patel D."/>
            <person name="Pearce A.V."/>
            <person name="Peck A.I."/>
            <person name="Pelan S."/>
            <person name="Phelps K."/>
            <person name="Phillimore B.J."/>
            <person name="Plumb R."/>
            <person name="Rajan J."/>
            <person name="Raymond C."/>
            <person name="Rouse G."/>
            <person name="Saenphimmachak C."/>
            <person name="Sehra H.K."/>
            <person name="Sheridan E."/>
            <person name="Shownkeen R."/>
            <person name="Sims S."/>
            <person name="Skuce C.D."/>
            <person name="Smith M."/>
            <person name="Steward C."/>
            <person name="Subramanian S."/>
            <person name="Sycamore N."/>
            <person name="Tracey A."/>
            <person name="Tromans A."/>
            <person name="Van Helmond Z."/>
            <person name="Wall M."/>
            <person name="Wallis J.M."/>
            <person name="White S."/>
            <person name="Whitehead S.L."/>
            <person name="Wilkinson J.E."/>
            <person name="Willey D.L."/>
            <person name="Williams H."/>
            <person name="Wilming L."/>
            <person name="Wray P.W."/>
            <person name="Wu Z."/>
            <person name="Coulson A."/>
            <person name="Vaudin M."/>
            <person name="Sulston J.E."/>
            <person name="Durbin R.M."/>
            <person name="Hubbard T."/>
            <person name="Wooster R."/>
            <person name="Dunham I."/>
            <person name="Carter N.P."/>
            <person name="McVean G."/>
            <person name="Ross M.T."/>
            <person name="Harrow J."/>
            <person name="Olson M.V."/>
            <person name="Beck S."/>
            <person name="Rogers J."/>
            <person name="Bentley D.R."/>
        </authorList>
    </citation>
    <scope>NUCLEOTIDE SEQUENCE [LARGE SCALE GENOMIC DNA]</scope>
</reference>
<reference key="3">
    <citation type="submission" date="2005-09" db="EMBL/GenBank/DDBJ databases">
        <authorList>
            <person name="Mural R.J."/>
            <person name="Istrail S."/>
            <person name="Sutton G.G."/>
            <person name="Florea L."/>
            <person name="Halpern A.L."/>
            <person name="Mobarry C.M."/>
            <person name="Lippert R."/>
            <person name="Walenz B."/>
            <person name="Shatkay H."/>
            <person name="Dew I."/>
            <person name="Miller J.R."/>
            <person name="Flanigan M.J."/>
            <person name="Edwards N.J."/>
            <person name="Bolanos R."/>
            <person name="Fasulo D."/>
            <person name="Halldorsson B.V."/>
            <person name="Hannenhalli S."/>
            <person name="Turner R."/>
            <person name="Yooseph S."/>
            <person name="Lu F."/>
            <person name="Nusskern D.R."/>
            <person name="Shue B.C."/>
            <person name="Zheng X.H."/>
            <person name="Zhong F."/>
            <person name="Delcher A.L."/>
            <person name="Huson D.H."/>
            <person name="Kravitz S.A."/>
            <person name="Mouchard L."/>
            <person name="Reinert K."/>
            <person name="Remington K.A."/>
            <person name="Clark A.G."/>
            <person name="Waterman M.S."/>
            <person name="Eichler E.E."/>
            <person name="Adams M.D."/>
            <person name="Hunkapiller M.W."/>
            <person name="Myers E.W."/>
            <person name="Venter J.C."/>
        </authorList>
    </citation>
    <scope>NUCLEOTIDE SEQUENCE [LARGE SCALE GENOMIC DNA]</scope>
</reference>
<reference key="4">
    <citation type="journal article" date="2004" name="Genome Res.">
        <title>The status, quality, and expansion of the NIH full-length cDNA project: the Mammalian Gene Collection (MGC).</title>
        <authorList>
            <consortium name="The MGC Project Team"/>
        </authorList>
    </citation>
    <scope>NUCLEOTIDE SEQUENCE [LARGE SCALE MRNA] (ISOFORMS 4 AND 2)</scope>
    <source>
        <tissue>Bone marrow</tissue>
    </source>
</reference>
<dbReference type="EMBL" id="AF126163">
    <property type="protein sequence ID" value="AAD33288.1"/>
    <property type="status" value="ALT_FRAME"/>
    <property type="molecule type" value="mRNA"/>
</dbReference>
<dbReference type="EMBL" id="AF126164">
    <property type="protein sequence ID" value="AAD33289.1"/>
    <property type="molecule type" value="mRNA"/>
</dbReference>
<dbReference type="EMBL" id="AL158839">
    <property type="status" value="NOT_ANNOTATED_CDS"/>
    <property type="molecule type" value="Genomic_DNA"/>
</dbReference>
<dbReference type="EMBL" id="CH471059">
    <property type="protein sequence ID" value="EAX06452.1"/>
    <property type="molecule type" value="Genomic_DNA"/>
</dbReference>
<dbReference type="EMBL" id="CH471059">
    <property type="protein sequence ID" value="EAX06453.1"/>
    <property type="molecule type" value="Genomic_DNA"/>
</dbReference>
<dbReference type="EMBL" id="CH471059">
    <property type="protein sequence ID" value="EAX06455.1"/>
    <property type="molecule type" value="Genomic_DNA"/>
</dbReference>
<dbReference type="EMBL" id="BC010922">
    <property type="protein sequence ID" value="AAH10922.1"/>
    <property type="molecule type" value="mRNA"/>
</dbReference>
<dbReference type="EMBL" id="BG773961">
    <property type="status" value="NOT_ANNOTATED_CDS"/>
    <property type="molecule type" value="mRNA"/>
</dbReference>
<dbReference type="RefSeq" id="NP_001026863.1">
    <property type="nucleotide sequence ID" value="NM_001031693.2"/>
</dbReference>
<dbReference type="RefSeq" id="NP_001031722.1">
    <property type="nucleotide sequence ID" value="NM_001036645.1"/>
</dbReference>
<dbReference type="RefSeq" id="NP_001031723.1">
    <property type="nucleotide sequence ID" value="NM_001036646.1"/>
</dbReference>
<dbReference type="BioGRID" id="116319">
    <property type="interactions" value="6"/>
</dbReference>
<dbReference type="FunCoup" id="Q9XRX5">
    <property type="interactions" value="3"/>
</dbReference>
<dbReference type="IntAct" id="Q9XRX5">
    <property type="interactions" value="3"/>
</dbReference>
<dbReference type="STRING" id="9606.ENSP00000359978"/>
<dbReference type="iPTMnet" id="Q9XRX5"/>
<dbReference type="PhosphoSitePlus" id="Q9XRX5"/>
<dbReference type="BioMuta" id="HHLA3"/>
<dbReference type="DMDM" id="334302897"/>
<dbReference type="MassIVE" id="Q9XRX5"/>
<dbReference type="PaxDb" id="9606-ENSP00000359978"/>
<dbReference type="PeptideAtlas" id="Q9XRX5"/>
<dbReference type="DNASU" id="11147"/>
<dbReference type="UCSC" id="uc001dfa.4">
    <molecule id="Q9XRX5-4"/>
    <property type="organism name" value="human"/>
</dbReference>
<dbReference type="AGR" id="HGNC:4906"/>
<dbReference type="GeneCards" id="ANKRD13C-DT"/>
<dbReference type="HGNC" id="HGNC:4906">
    <property type="gene designation" value="ANKRD13C-DT"/>
</dbReference>
<dbReference type="MIM" id="604372">
    <property type="type" value="gene"/>
</dbReference>
<dbReference type="neXtProt" id="NX_Q9XRX5"/>
<dbReference type="PharmGKB" id="PA29279"/>
<dbReference type="eggNOG" id="ENOG502TE2V">
    <property type="taxonomic scope" value="Eukaryota"/>
</dbReference>
<dbReference type="HOGENOM" id="CLU_2677598_0_0_1"/>
<dbReference type="InParanoid" id="Q9XRX5"/>
<dbReference type="PAN-GO" id="Q9XRX5">
    <property type="GO annotations" value="0 GO annotations based on evolutionary models"/>
</dbReference>
<dbReference type="PathwayCommons" id="Q9XRX5"/>
<dbReference type="SignaLink" id="Q9XRX5"/>
<dbReference type="BioGRID-ORCS" id="11147">
    <property type="hits" value="8 hits in 1151 CRISPR screens"/>
</dbReference>
<dbReference type="GenomeRNAi" id="11147"/>
<dbReference type="Pharos" id="Q9XRX5">
    <property type="development level" value="Tdark"/>
</dbReference>
<dbReference type="PRO" id="PR:Q9XRX5"/>
<dbReference type="Proteomes" id="UP000005640">
    <property type="component" value="Chromosome 1"/>
</dbReference>
<dbReference type="RNAct" id="Q9XRX5">
    <property type="molecule type" value="protein"/>
</dbReference>
<feature type="chain" id="PRO_0000249708" description="Putative uncharacterized protein ANKRD13C-DT">
    <location>
        <begin position="1"/>
        <end position="114"/>
    </location>
</feature>
<feature type="region of interest" description="Disordered" evidence="1">
    <location>
        <begin position="1"/>
        <end position="24"/>
    </location>
</feature>
<feature type="splice variant" id="VSP_020542" description="In isoform 3." evidence="3">
    <original>CTKLANMYSTSTDCREHCRRGMKAKQLKAEAGRSCQRKGVPIQTPREHSWISCKKEFEANP</original>
    <variation>LSTERGPYPDPKRAFLDLLQERI</variation>
    <location>
        <begin position="54"/>
        <end position="114"/>
    </location>
</feature>
<feature type="splice variant" id="VSP_041094" description="In isoform 2." evidence="4">
    <original>TKLANMYSTSTDCREHCRRGMKAKQLKAEAGRSCQRKGVPIQTPREHSWISCKKEFEANP</original>
    <variation>LVNGKGSLSRPQESILGSLARKNLRRIHRVSLVMCVRPLSPSKAIISPVTCMYTSRWPEASEESQKK</variation>
    <location>
        <begin position="55"/>
        <end position="114"/>
    </location>
</feature>
<feature type="sequence conflict" description="In Ref. 1; AAD33288." evidence="6" ref="1">
    <original>R</original>
    <variation>G</variation>
    <location>
        <position position="27"/>
    </location>
</feature>
<feature type="sequence conflict" description="In Ref. 1; AAD33288." evidence="6" ref="1">
    <original>G</original>
    <variation>W</variation>
    <location>
        <position position="85"/>
    </location>
</feature>
<protein>
    <recommendedName>
        <fullName evidence="6">Putative uncharacterized protein ANKRD13C-DT</fullName>
    </recommendedName>
    <alternativeName>
        <fullName evidence="7">ANKRD13C divergent transcript</fullName>
    </alternativeName>
    <alternativeName>
        <fullName>HERV-H LTR-associating protein 3</fullName>
    </alternativeName>
    <alternativeName>
        <fullName>Human endogenous retrovirus-H long terminal repeat-associating protein 3</fullName>
    </alternativeName>
</protein>